<evidence type="ECO:0000255" key="1">
    <source>
        <dbReference type="HAMAP-Rule" id="MF_00752"/>
    </source>
</evidence>
<protein>
    <recommendedName>
        <fullName evidence="1">Photosystem II reaction center protein H</fullName>
        <shortName evidence="1">PSII-H</shortName>
    </recommendedName>
</protein>
<accession>B8HR15</accession>
<gene>
    <name evidence="1" type="primary">psbH</name>
    <name type="ordered locus">Cyan7425_3514</name>
</gene>
<keyword id="KW-0472">Membrane</keyword>
<keyword id="KW-0602">Photosynthesis</keyword>
<keyword id="KW-0604">Photosystem II</keyword>
<keyword id="KW-0793">Thylakoid</keyword>
<keyword id="KW-0812">Transmembrane</keyword>
<keyword id="KW-1133">Transmembrane helix</keyword>
<reference key="1">
    <citation type="journal article" date="2011" name="MBio">
        <title>Novel metabolic attributes of the genus Cyanothece, comprising a group of unicellular nitrogen-fixing Cyanobacteria.</title>
        <authorList>
            <person name="Bandyopadhyay A."/>
            <person name="Elvitigala T."/>
            <person name="Welsh E."/>
            <person name="Stockel J."/>
            <person name="Liberton M."/>
            <person name="Min H."/>
            <person name="Sherman L.A."/>
            <person name="Pakrasi H.B."/>
        </authorList>
    </citation>
    <scope>NUCLEOTIDE SEQUENCE [LARGE SCALE GENOMIC DNA]</scope>
    <source>
        <strain>PCC 7425 / ATCC 29141</strain>
    </source>
</reference>
<feature type="chain" id="PRO_1000148356" description="Photosystem II reaction center protein H">
    <location>
        <begin position="1"/>
        <end position="67"/>
    </location>
</feature>
<feature type="transmembrane region" description="Helical" evidence="1">
    <location>
        <begin position="26"/>
        <end position="46"/>
    </location>
</feature>
<comment type="function">
    <text evidence="1">One of the components of the core complex of photosystem II (PSII), required for its stability and/or assembly. PSII is a light-driven water:plastoquinone oxidoreductase that uses light energy to abstract electrons from H(2)O, generating O(2) and a proton gradient subsequently used for ATP formation. It consists of a core antenna complex that captures photons, and an electron transfer chain that converts photonic excitation into a charge separation.</text>
</comment>
<comment type="subunit">
    <text evidence="1">PSII is composed of 1 copy each of membrane proteins PsbA, PsbB, PsbC, PsbD, PsbE, PsbF, PsbH, PsbI, PsbJ, PsbK, PsbL, PsbM, PsbT, PsbX, PsbY, PsbZ, Psb30/Ycf12, peripheral proteins PsbO, CyanoQ (PsbQ), PsbU, PsbV and a large number of cofactors. It forms dimeric complexes.</text>
</comment>
<comment type="subcellular location">
    <subcellularLocation>
        <location evidence="1">Cellular thylakoid membrane</location>
        <topology evidence="1">Single-pass membrane protein</topology>
    </subcellularLocation>
</comment>
<comment type="similarity">
    <text evidence="1">Belongs to the PsbH family.</text>
</comment>
<dbReference type="EMBL" id="CP001344">
    <property type="protein sequence ID" value="ACL45836.1"/>
    <property type="molecule type" value="Genomic_DNA"/>
</dbReference>
<dbReference type="SMR" id="B8HR15"/>
<dbReference type="STRING" id="395961.Cyan7425_3514"/>
<dbReference type="KEGG" id="cyn:Cyan7425_3514"/>
<dbReference type="eggNOG" id="ENOG50332MV">
    <property type="taxonomic scope" value="Bacteria"/>
</dbReference>
<dbReference type="HOGENOM" id="CLU_190203_0_0_3"/>
<dbReference type="GO" id="GO:0009523">
    <property type="term" value="C:photosystem II"/>
    <property type="evidence" value="ECO:0007669"/>
    <property type="project" value="UniProtKB-KW"/>
</dbReference>
<dbReference type="GO" id="GO:0031676">
    <property type="term" value="C:plasma membrane-derived thylakoid membrane"/>
    <property type="evidence" value="ECO:0007669"/>
    <property type="project" value="UniProtKB-SubCell"/>
</dbReference>
<dbReference type="GO" id="GO:0042301">
    <property type="term" value="F:phosphate ion binding"/>
    <property type="evidence" value="ECO:0007669"/>
    <property type="project" value="InterPro"/>
</dbReference>
<dbReference type="GO" id="GO:0015979">
    <property type="term" value="P:photosynthesis"/>
    <property type="evidence" value="ECO:0007669"/>
    <property type="project" value="UniProtKB-UniRule"/>
</dbReference>
<dbReference type="GO" id="GO:0050821">
    <property type="term" value="P:protein stabilization"/>
    <property type="evidence" value="ECO:0007669"/>
    <property type="project" value="InterPro"/>
</dbReference>
<dbReference type="Gene3D" id="1.20.5.880">
    <property type="entry name" value="Photosystem II reaction center protein H"/>
    <property type="match status" value="1"/>
</dbReference>
<dbReference type="HAMAP" id="MF_00752">
    <property type="entry name" value="PSII_PsbH"/>
    <property type="match status" value="1"/>
</dbReference>
<dbReference type="InterPro" id="IPR001056">
    <property type="entry name" value="PSII_PsbH"/>
</dbReference>
<dbReference type="InterPro" id="IPR036863">
    <property type="entry name" value="PSII_PsbH_sf"/>
</dbReference>
<dbReference type="NCBIfam" id="NF002728">
    <property type="entry name" value="PRK02624.1"/>
    <property type="match status" value="1"/>
</dbReference>
<dbReference type="PANTHER" id="PTHR34469">
    <property type="entry name" value="PHOTOSYSTEM II REACTION CENTER PROTEIN H"/>
    <property type="match status" value="1"/>
</dbReference>
<dbReference type="PANTHER" id="PTHR34469:SF4">
    <property type="entry name" value="PHOTOSYSTEM II REACTION CENTER PROTEIN H"/>
    <property type="match status" value="1"/>
</dbReference>
<dbReference type="Pfam" id="PF00737">
    <property type="entry name" value="PsbH"/>
    <property type="match status" value="1"/>
</dbReference>
<dbReference type="SUPFAM" id="SSF161025">
    <property type="entry name" value="Photosystem II 10 kDa phosphoprotein PsbH"/>
    <property type="match status" value="1"/>
</dbReference>
<sequence>MAKRTWLGDVLKPLNSEYGKVAPGWGTAPLMAVFMGLFLVFLLIILELYNSTLMLEGVNVNWTALGS</sequence>
<name>PSBH_CYAP4</name>
<organism>
    <name type="scientific">Cyanothece sp. (strain PCC 7425 / ATCC 29141)</name>
    <dbReference type="NCBI Taxonomy" id="395961"/>
    <lineage>
        <taxon>Bacteria</taxon>
        <taxon>Bacillati</taxon>
        <taxon>Cyanobacteriota</taxon>
        <taxon>Cyanophyceae</taxon>
        <taxon>Gomontiellales</taxon>
        <taxon>Cyanothecaceae</taxon>
        <taxon>Cyanothece</taxon>
    </lineage>
</organism>
<proteinExistence type="inferred from homology"/>